<feature type="chain" id="PRO_1000052593" description="Large ribosomal subunit protein uL22">
    <location>
        <begin position="1"/>
        <end position="115"/>
    </location>
</feature>
<comment type="function">
    <text evidence="1">This protein binds specifically to 23S rRNA; its binding is stimulated by other ribosomal proteins, e.g. L4, L17, and L20. It is important during the early stages of 50S assembly. It makes multiple contacts with different domains of the 23S rRNA in the assembled 50S subunit and ribosome (By similarity).</text>
</comment>
<comment type="function">
    <text evidence="1">The globular domain of the protein is located near the polypeptide exit tunnel on the outside of the subunit, while an extended beta-hairpin is found that lines the wall of the exit tunnel in the center of the 70S ribosome.</text>
</comment>
<comment type="subunit">
    <text evidence="1">Part of the 50S ribosomal subunit.</text>
</comment>
<comment type="similarity">
    <text evidence="1">Belongs to the universal ribosomal protein uL22 family.</text>
</comment>
<evidence type="ECO:0000255" key="1">
    <source>
        <dbReference type="HAMAP-Rule" id="MF_01331"/>
    </source>
</evidence>
<evidence type="ECO:0000305" key="2"/>
<sequence>MAEITSAKATAKTVRVSPRKTRLVIDLIRGKRVADAIAILKFTPTKAAVEVENVLNSAIANAENNFGLEKANLVVSETFINEGPTMKRFRPRAKGSASPINKRTAHITVVVAEKE</sequence>
<protein>
    <recommendedName>
        <fullName evidence="1">Large ribosomal subunit protein uL22</fullName>
    </recommendedName>
    <alternativeName>
        <fullName evidence="2">50S ribosomal protein L22</fullName>
    </alternativeName>
</protein>
<gene>
    <name evidence="1" type="primary">rplV</name>
    <name type="ordered locus">llmg_2378</name>
</gene>
<dbReference type="EMBL" id="AM406671">
    <property type="protein sequence ID" value="CAL98941.1"/>
    <property type="molecule type" value="Genomic_DNA"/>
</dbReference>
<dbReference type="RefSeq" id="WP_010906302.1">
    <property type="nucleotide sequence ID" value="NZ_WJVF01000005.1"/>
</dbReference>
<dbReference type="PDB" id="5MYJ">
    <property type="method" value="EM"/>
    <property type="resolution" value="5.60 A"/>
    <property type="chains" value="BV=1-115"/>
</dbReference>
<dbReference type="PDBsum" id="5MYJ"/>
<dbReference type="EMDB" id="EMD-3581"/>
<dbReference type="SMR" id="A2RNQ0"/>
<dbReference type="STRING" id="416870.llmg_2378"/>
<dbReference type="GeneID" id="89634441"/>
<dbReference type="KEGG" id="llm:llmg_2378"/>
<dbReference type="eggNOG" id="COG0091">
    <property type="taxonomic scope" value="Bacteria"/>
</dbReference>
<dbReference type="HOGENOM" id="CLU_083987_3_3_9"/>
<dbReference type="OrthoDB" id="9805969at2"/>
<dbReference type="PhylomeDB" id="A2RNQ0"/>
<dbReference type="Proteomes" id="UP000000364">
    <property type="component" value="Chromosome"/>
</dbReference>
<dbReference type="GO" id="GO:0022625">
    <property type="term" value="C:cytosolic large ribosomal subunit"/>
    <property type="evidence" value="ECO:0007669"/>
    <property type="project" value="TreeGrafter"/>
</dbReference>
<dbReference type="GO" id="GO:0019843">
    <property type="term" value="F:rRNA binding"/>
    <property type="evidence" value="ECO:0007669"/>
    <property type="project" value="UniProtKB-UniRule"/>
</dbReference>
<dbReference type="GO" id="GO:0003735">
    <property type="term" value="F:structural constituent of ribosome"/>
    <property type="evidence" value="ECO:0007669"/>
    <property type="project" value="InterPro"/>
</dbReference>
<dbReference type="GO" id="GO:0006412">
    <property type="term" value="P:translation"/>
    <property type="evidence" value="ECO:0007669"/>
    <property type="project" value="UniProtKB-UniRule"/>
</dbReference>
<dbReference type="CDD" id="cd00336">
    <property type="entry name" value="Ribosomal_L22"/>
    <property type="match status" value="1"/>
</dbReference>
<dbReference type="FunFam" id="3.90.470.10:FF:000001">
    <property type="entry name" value="50S ribosomal protein L22"/>
    <property type="match status" value="1"/>
</dbReference>
<dbReference type="Gene3D" id="3.90.470.10">
    <property type="entry name" value="Ribosomal protein L22/L17"/>
    <property type="match status" value="1"/>
</dbReference>
<dbReference type="HAMAP" id="MF_01331_B">
    <property type="entry name" value="Ribosomal_uL22_B"/>
    <property type="match status" value="1"/>
</dbReference>
<dbReference type="InterPro" id="IPR001063">
    <property type="entry name" value="Ribosomal_uL22"/>
</dbReference>
<dbReference type="InterPro" id="IPR005727">
    <property type="entry name" value="Ribosomal_uL22_bac/chlpt-type"/>
</dbReference>
<dbReference type="InterPro" id="IPR047867">
    <property type="entry name" value="Ribosomal_uL22_bac/org-type"/>
</dbReference>
<dbReference type="InterPro" id="IPR018260">
    <property type="entry name" value="Ribosomal_uL22_CS"/>
</dbReference>
<dbReference type="InterPro" id="IPR036394">
    <property type="entry name" value="Ribosomal_uL22_sf"/>
</dbReference>
<dbReference type="NCBIfam" id="TIGR01044">
    <property type="entry name" value="rplV_bact"/>
    <property type="match status" value="1"/>
</dbReference>
<dbReference type="PANTHER" id="PTHR13501">
    <property type="entry name" value="CHLOROPLAST 50S RIBOSOMAL PROTEIN L22-RELATED"/>
    <property type="match status" value="1"/>
</dbReference>
<dbReference type="PANTHER" id="PTHR13501:SF8">
    <property type="entry name" value="LARGE RIBOSOMAL SUBUNIT PROTEIN UL22M"/>
    <property type="match status" value="1"/>
</dbReference>
<dbReference type="Pfam" id="PF00237">
    <property type="entry name" value="Ribosomal_L22"/>
    <property type="match status" value="1"/>
</dbReference>
<dbReference type="SUPFAM" id="SSF54843">
    <property type="entry name" value="Ribosomal protein L22"/>
    <property type="match status" value="1"/>
</dbReference>
<dbReference type="PROSITE" id="PS00464">
    <property type="entry name" value="RIBOSOMAL_L22"/>
    <property type="match status" value="1"/>
</dbReference>
<name>RL22_LACLM</name>
<accession>A2RNQ0</accession>
<organism>
    <name type="scientific">Lactococcus lactis subsp. cremoris (strain MG1363)</name>
    <dbReference type="NCBI Taxonomy" id="416870"/>
    <lineage>
        <taxon>Bacteria</taxon>
        <taxon>Bacillati</taxon>
        <taxon>Bacillota</taxon>
        <taxon>Bacilli</taxon>
        <taxon>Lactobacillales</taxon>
        <taxon>Streptococcaceae</taxon>
        <taxon>Lactococcus</taxon>
        <taxon>Lactococcus cremoris subsp. cremoris</taxon>
    </lineage>
</organism>
<keyword id="KW-0002">3D-structure</keyword>
<keyword id="KW-0687">Ribonucleoprotein</keyword>
<keyword id="KW-0689">Ribosomal protein</keyword>
<keyword id="KW-0694">RNA-binding</keyword>
<keyword id="KW-0699">rRNA-binding</keyword>
<proteinExistence type="evidence at protein level"/>
<reference key="1">
    <citation type="journal article" date="2007" name="J. Bacteriol.">
        <title>The complete genome sequence of the lactic acid bacterial paradigm Lactococcus lactis subsp. cremoris MG1363.</title>
        <authorList>
            <person name="Wegmann U."/>
            <person name="O'Connell-Motherway M."/>
            <person name="Zomer A."/>
            <person name="Buist G."/>
            <person name="Shearman C."/>
            <person name="Canchaya C."/>
            <person name="Ventura M."/>
            <person name="Goesmann A."/>
            <person name="Gasson M.J."/>
            <person name="Kuipers O.P."/>
            <person name="van Sinderen D."/>
            <person name="Kok J."/>
        </authorList>
    </citation>
    <scope>NUCLEOTIDE SEQUENCE [LARGE SCALE GENOMIC DNA]</scope>
    <source>
        <strain>MG1363</strain>
    </source>
</reference>